<sequence>MTTQVPPHSVQVHTTTTHRYEAGVVPPGARFETSYEAGVKAASIYHSERGPTTSQVLAVLAGLPVGGILLLLAGLTLAGTLTGLAVATPLFVLFSPVLVPATVAIGLAVAGFLTSGAFGLTALSSFSWILNYIRETQPASENLAAAAKHHLAEAAEYVGQKTKEVGQKTKEVGQDIQSKAQDTREAAARDAREAAARDAREAAARDAKVEARDVKRTTVTATTATA</sequence>
<comment type="function">
    <text>May have a structural role to stabilize the lipid body during desiccation of the seed by preventing coalescence of the oil. Probably interacts with both lipid and phospholipid moieties of lipid bodies. May also provide recognition signals for specific lipase anchorage in lipolysis during seedling growth.</text>
</comment>
<comment type="subcellular location">
    <subcellularLocation>
        <location>Lipid droplet</location>
    </subcellularLocation>
    <subcellularLocation>
        <location>Membrane</location>
        <topology>Multi-pass membrane protein</topology>
    </subcellularLocation>
    <text>Surface of oil bodies. Oleosins exist at a monolayer lipid/water interface.</text>
</comment>
<comment type="similarity">
    <text evidence="3">Belongs to the oleosin family.</text>
</comment>
<keyword id="KW-0551">Lipid droplet</keyword>
<keyword id="KW-0472">Membrane</keyword>
<keyword id="KW-1185">Reference proteome</keyword>
<keyword id="KW-0677">Repeat</keyword>
<keyword id="KW-0812">Transmembrane</keyword>
<keyword id="KW-1133">Transmembrane helix</keyword>
<feature type="chain" id="PRO_0000108142" description="P24 oleosin isoform A">
    <location>
        <begin position="1"/>
        <end position="226"/>
    </location>
</feature>
<feature type="transmembrane region" description="Helical" evidence="1">
    <location>
        <begin position="56"/>
        <end position="76"/>
    </location>
</feature>
<feature type="transmembrane region" description="Helical" evidence="1">
    <location>
        <begin position="90"/>
        <end position="110"/>
    </location>
</feature>
<feature type="transmembrane region" description="Helical" evidence="1">
    <location>
        <begin position="111"/>
        <end position="131"/>
    </location>
</feature>
<feature type="repeat" description="1-1">
    <location>
        <begin position="159"/>
        <end position="165"/>
    </location>
</feature>
<feature type="repeat" description="1-2">
    <location>
        <begin position="166"/>
        <end position="173"/>
    </location>
</feature>
<feature type="repeat" description="2-1">
    <location>
        <begin position="184"/>
        <end position="191"/>
    </location>
</feature>
<feature type="repeat" description="2-2">
    <location>
        <begin position="192"/>
        <end position="199"/>
    </location>
</feature>
<feature type="repeat" description="2-3">
    <location>
        <begin position="200"/>
        <end position="207"/>
    </location>
</feature>
<feature type="region of interest" description="Polar">
    <location>
        <begin position="1"/>
        <end position="76"/>
    </location>
</feature>
<feature type="region of interest" description="Hydrophobic">
    <location>
        <begin position="77"/>
        <end position="130"/>
    </location>
</feature>
<feature type="region of interest" description="2 X 7 AA tandem repeats">
    <location>
        <begin position="159"/>
        <end position="173"/>
    </location>
</feature>
<feature type="region of interest" description="Disordered" evidence="2">
    <location>
        <begin position="164"/>
        <end position="226"/>
    </location>
</feature>
<feature type="region of interest" description="3 X 8 AA tandem repeats">
    <location>
        <begin position="184"/>
        <end position="207"/>
    </location>
</feature>
<feature type="compositionally biased region" description="Basic and acidic residues" evidence="2">
    <location>
        <begin position="164"/>
        <end position="173"/>
    </location>
</feature>
<feature type="compositionally biased region" description="Basic and acidic residues" evidence="2">
    <location>
        <begin position="181"/>
        <end position="216"/>
    </location>
</feature>
<feature type="compositionally biased region" description="Low complexity" evidence="2">
    <location>
        <begin position="217"/>
        <end position="226"/>
    </location>
</feature>
<feature type="sequence conflict" description="In Ref. 2; CAA43182." evidence="3" ref="2">
    <original>LT</original>
    <variation>NS</variation>
    <location>
        <begin position="75"/>
        <end position="76"/>
    </location>
</feature>
<protein>
    <recommendedName>
        <fullName>P24 oleosin isoform A</fullName>
    </recommendedName>
    <alternativeName>
        <fullName>P89</fullName>
    </alternativeName>
</protein>
<dbReference type="EMBL" id="U09118">
    <property type="protein sequence ID" value="AAA17854.1"/>
    <property type="molecule type" value="Unassigned_DNA"/>
</dbReference>
<dbReference type="EMBL" id="X60772">
    <property type="protein sequence ID" value="CAA43182.1"/>
    <property type="molecule type" value="mRNA"/>
</dbReference>
<dbReference type="PIR" id="S17935">
    <property type="entry name" value="S17935"/>
</dbReference>
<dbReference type="PIR" id="T06378">
    <property type="entry name" value="T06378"/>
</dbReference>
<dbReference type="SMR" id="P29530"/>
<dbReference type="PaxDb" id="3847-GLYMA19G13060.1"/>
<dbReference type="eggNOG" id="ENOG502S1R0">
    <property type="taxonomic scope" value="Eukaryota"/>
</dbReference>
<dbReference type="InParanoid" id="P29530"/>
<dbReference type="Proteomes" id="UP000008827">
    <property type="component" value="Unplaced"/>
</dbReference>
<dbReference type="GO" id="GO:0016020">
    <property type="term" value="C:membrane"/>
    <property type="evidence" value="ECO:0007669"/>
    <property type="project" value="UniProtKB-SubCell"/>
</dbReference>
<dbReference type="GO" id="GO:0012511">
    <property type="term" value="C:monolayer-surrounded lipid storage body"/>
    <property type="evidence" value="ECO:0000318"/>
    <property type="project" value="GO_Central"/>
</dbReference>
<dbReference type="GO" id="GO:0019915">
    <property type="term" value="P:lipid storage"/>
    <property type="evidence" value="ECO:0000318"/>
    <property type="project" value="GO_Central"/>
</dbReference>
<dbReference type="GO" id="GO:0050826">
    <property type="term" value="P:response to freezing"/>
    <property type="evidence" value="ECO:0000318"/>
    <property type="project" value="GO_Central"/>
</dbReference>
<dbReference type="GO" id="GO:0010344">
    <property type="term" value="P:seed oilbody biogenesis"/>
    <property type="evidence" value="ECO:0000318"/>
    <property type="project" value="GO_Central"/>
</dbReference>
<dbReference type="InterPro" id="IPR000136">
    <property type="entry name" value="Oleosin"/>
</dbReference>
<dbReference type="PANTHER" id="PTHR33203">
    <property type="entry name" value="OLEOSIN"/>
    <property type="match status" value="1"/>
</dbReference>
<dbReference type="PANTHER" id="PTHR33203:SF44">
    <property type="entry name" value="OLEOSIN 20.3 KDA"/>
    <property type="match status" value="1"/>
</dbReference>
<dbReference type="Pfam" id="PF01277">
    <property type="entry name" value="Oleosin"/>
    <property type="match status" value="1"/>
</dbReference>
<dbReference type="PROSITE" id="PS00811">
    <property type="entry name" value="OLEOSINS"/>
    <property type="match status" value="1"/>
</dbReference>
<evidence type="ECO:0000255" key="1"/>
<evidence type="ECO:0000256" key="2">
    <source>
        <dbReference type="SAM" id="MobiDB-lite"/>
    </source>
</evidence>
<evidence type="ECO:0000305" key="3"/>
<proteinExistence type="evidence at transcript level"/>
<reference key="1">
    <citation type="journal article" date="1997" name="Biochim. Biophys. Acta">
        <title>The upstream domain of soybean oleosin genes contains regulatory elements similar to those of legume storage proteins.</title>
        <authorList>
            <person name="Rowley D.L."/>
            <person name="Herman E.M."/>
        </authorList>
    </citation>
    <scope>NUCLEOTIDE SEQUENCE [GENOMIC DNA]</scope>
    <source>
        <strain>cv. Century 84</strain>
    </source>
</reference>
<reference key="2">
    <citation type="journal article" date="1991" name="Plant Mol. Biol.">
        <title>Isoforms of soybean seed oil body membrane protein 24 kDa oleosin are encoded by closely related cDNAs.</title>
        <authorList>
            <person name="Kalinski A."/>
            <person name="Loer D.S."/>
            <person name="Weisemann J.M."/>
            <person name="Matthews B.F."/>
            <person name="Herman E.M."/>
        </authorList>
    </citation>
    <scope>NUCLEOTIDE SEQUENCE [MRNA] OF 75-226</scope>
    <source>
        <strain>cv. Century</strain>
    </source>
</reference>
<accession>P29530</accession>
<name>OLEO1_SOYBN</name>
<organism>
    <name type="scientific">Glycine max</name>
    <name type="common">Soybean</name>
    <name type="synonym">Glycine hispida</name>
    <dbReference type="NCBI Taxonomy" id="3847"/>
    <lineage>
        <taxon>Eukaryota</taxon>
        <taxon>Viridiplantae</taxon>
        <taxon>Streptophyta</taxon>
        <taxon>Embryophyta</taxon>
        <taxon>Tracheophyta</taxon>
        <taxon>Spermatophyta</taxon>
        <taxon>Magnoliopsida</taxon>
        <taxon>eudicotyledons</taxon>
        <taxon>Gunneridae</taxon>
        <taxon>Pentapetalae</taxon>
        <taxon>rosids</taxon>
        <taxon>fabids</taxon>
        <taxon>Fabales</taxon>
        <taxon>Fabaceae</taxon>
        <taxon>Papilionoideae</taxon>
        <taxon>50 kb inversion clade</taxon>
        <taxon>NPAAA clade</taxon>
        <taxon>indigoferoid/millettioid clade</taxon>
        <taxon>Phaseoleae</taxon>
        <taxon>Glycine</taxon>
        <taxon>Glycine subgen. Soja</taxon>
    </lineage>
</organism>